<dbReference type="EMBL" id="AY673647">
    <property type="protein sequence ID" value="AAT77542.1"/>
    <property type="status" value="ALT_INIT"/>
    <property type="molecule type" value="mRNA"/>
</dbReference>
<dbReference type="EMBL" id="BC141199">
    <property type="protein sequence ID" value="AAI41200.1"/>
    <property type="molecule type" value="mRNA"/>
</dbReference>
<dbReference type="EMBL" id="AY596199">
    <property type="protein sequence ID" value="AAU06320.1"/>
    <property type="molecule type" value="mRNA"/>
</dbReference>
<dbReference type="CCDS" id="CCDS21688.1"/>
<dbReference type="RefSeq" id="NP_001002894.2">
    <property type="nucleotide sequence ID" value="NM_001002894.2"/>
</dbReference>
<dbReference type="RefSeq" id="XP_011240240.1">
    <property type="nucleotide sequence ID" value="XM_011241938.2"/>
</dbReference>
<dbReference type="SMR" id="Q6B966"/>
<dbReference type="BioGRID" id="218354">
    <property type="interactions" value="1"/>
</dbReference>
<dbReference type="IntAct" id="Q6B966">
    <property type="interactions" value="1"/>
</dbReference>
<dbReference type="MINT" id="Q6B966"/>
<dbReference type="STRING" id="10090.ENSMUSP00000081819"/>
<dbReference type="GlyGen" id="Q6B966">
    <property type="glycosylation" value="1 site, 1 O-linked glycan (1 site)"/>
</dbReference>
<dbReference type="iPTMnet" id="Q6B966"/>
<dbReference type="PhosphoSitePlus" id="Q6B966"/>
<dbReference type="PaxDb" id="10090-ENSMUSP00000081819"/>
<dbReference type="ProteomicsDB" id="293617"/>
<dbReference type="Antibodypedia" id="42308">
    <property type="antibodies" value="48 antibodies from 22 providers"/>
</dbReference>
<dbReference type="DNASU" id="76858"/>
<dbReference type="Ensembl" id="ENSMUST00000084763.5">
    <property type="protein sequence ID" value="ENSMUSP00000081819.3"/>
    <property type="gene ID" value="ENSMUSG00000016626.11"/>
</dbReference>
<dbReference type="GeneID" id="76858"/>
<dbReference type="KEGG" id="mmu:76858"/>
<dbReference type="UCSC" id="uc009jax.2">
    <property type="organism name" value="mouse"/>
</dbReference>
<dbReference type="AGR" id="MGI:1924108"/>
<dbReference type="CTD" id="338323"/>
<dbReference type="MGI" id="MGI:1924108">
    <property type="gene designation" value="Nlrp14"/>
</dbReference>
<dbReference type="VEuPathDB" id="HostDB:ENSMUSG00000016626"/>
<dbReference type="eggNOG" id="ENOG502QS9E">
    <property type="taxonomic scope" value="Eukaryota"/>
</dbReference>
<dbReference type="GeneTree" id="ENSGT00940000162005"/>
<dbReference type="HOGENOM" id="CLU_002274_2_1_1"/>
<dbReference type="InParanoid" id="Q6B966"/>
<dbReference type="OMA" id="HLTQMKC"/>
<dbReference type="OrthoDB" id="120976at2759"/>
<dbReference type="PhylomeDB" id="Q6B966"/>
<dbReference type="BioGRID-ORCS" id="76858">
    <property type="hits" value="2 hits in 78 CRISPR screens"/>
</dbReference>
<dbReference type="PRO" id="PR:Q6B966"/>
<dbReference type="Proteomes" id="UP000000589">
    <property type="component" value="Chromosome 7"/>
</dbReference>
<dbReference type="RNAct" id="Q6B966">
    <property type="molecule type" value="protein"/>
</dbReference>
<dbReference type="Bgee" id="ENSMUSG00000016626">
    <property type="expression patterns" value="Expressed in primary oocyte and 23 other cell types or tissues"/>
</dbReference>
<dbReference type="ExpressionAtlas" id="Q6B966">
    <property type="expression patterns" value="baseline and differential"/>
</dbReference>
<dbReference type="GO" id="GO:0005737">
    <property type="term" value="C:cytoplasm"/>
    <property type="evidence" value="ECO:0007669"/>
    <property type="project" value="UniProtKB-SubCell"/>
</dbReference>
<dbReference type="GO" id="GO:0005524">
    <property type="term" value="F:ATP binding"/>
    <property type="evidence" value="ECO:0007669"/>
    <property type="project" value="UniProtKB-KW"/>
</dbReference>
<dbReference type="GO" id="GO:0030154">
    <property type="term" value="P:cell differentiation"/>
    <property type="evidence" value="ECO:0007669"/>
    <property type="project" value="UniProtKB-KW"/>
</dbReference>
<dbReference type="GO" id="GO:0007283">
    <property type="term" value="P:spermatogenesis"/>
    <property type="evidence" value="ECO:0007669"/>
    <property type="project" value="UniProtKB-KW"/>
</dbReference>
<dbReference type="FunFam" id="3.40.50.300:FF:000442">
    <property type="entry name" value="NACHT, LRR and PYD domains-containing protein 3"/>
    <property type="match status" value="1"/>
</dbReference>
<dbReference type="Gene3D" id="3.40.50.300">
    <property type="entry name" value="P-loop containing nucleotide triphosphate hydrolases"/>
    <property type="match status" value="1"/>
</dbReference>
<dbReference type="Gene3D" id="3.80.10.10">
    <property type="entry name" value="Ribonuclease Inhibitor"/>
    <property type="match status" value="1"/>
</dbReference>
<dbReference type="InterPro" id="IPR001611">
    <property type="entry name" value="Leu-rich_rpt"/>
</dbReference>
<dbReference type="InterPro" id="IPR032675">
    <property type="entry name" value="LRR_dom_sf"/>
</dbReference>
<dbReference type="InterPro" id="IPR007111">
    <property type="entry name" value="NACHT_NTPase"/>
</dbReference>
<dbReference type="InterPro" id="IPR041267">
    <property type="entry name" value="NLRP_HD2"/>
</dbReference>
<dbReference type="InterPro" id="IPR050637">
    <property type="entry name" value="NLRP_innate_immun_reg"/>
</dbReference>
<dbReference type="InterPro" id="IPR041075">
    <property type="entry name" value="NOD1/2_WH"/>
</dbReference>
<dbReference type="InterPro" id="IPR027417">
    <property type="entry name" value="P-loop_NTPase"/>
</dbReference>
<dbReference type="PANTHER" id="PTHR45690">
    <property type="entry name" value="NACHT, LRR AND PYD DOMAINS-CONTAINING PROTEIN 12"/>
    <property type="match status" value="1"/>
</dbReference>
<dbReference type="PANTHER" id="PTHR45690:SF15">
    <property type="entry name" value="NACHT, LRR AND PYD DOMAINS-CONTAINING PROTEIN 14"/>
    <property type="match status" value="1"/>
</dbReference>
<dbReference type="Pfam" id="PF13516">
    <property type="entry name" value="LRR_6"/>
    <property type="match status" value="4"/>
</dbReference>
<dbReference type="Pfam" id="PF05729">
    <property type="entry name" value="NACHT"/>
    <property type="match status" value="1"/>
</dbReference>
<dbReference type="Pfam" id="PF17776">
    <property type="entry name" value="NLRC4_HD2"/>
    <property type="match status" value="1"/>
</dbReference>
<dbReference type="Pfam" id="PF17779">
    <property type="entry name" value="NOD2_WH"/>
    <property type="match status" value="1"/>
</dbReference>
<dbReference type="SMART" id="SM00368">
    <property type="entry name" value="LRR_RI"/>
    <property type="match status" value="11"/>
</dbReference>
<dbReference type="SUPFAM" id="SSF52540">
    <property type="entry name" value="P-loop containing nucleoside triphosphate hydrolases"/>
    <property type="match status" value="1"/>
</dbReference>
<dbReference type="SUPFAM" id="SSF52047">
    <property type="entry name" value="RNI-like"/>
    <property type="match status" value="2"/>
</dbReference>
<dbReference type="PROSITE" id="PS50837">
    <property type="entry name" value="NACHT"/>
    <property type="match status" value="1"/>
</dbReference>
<reference key="1">
    <citation type="journal article" date="2005" name="Biol. Reprod.">
        <title>The mouse germ-cell-specific leucine-rich repeat protein NALP14: a member of the NACHT nucleoside triphosphatase family.</title>
        <authorList>
            <person name="Horikawa M."/>
            <person name="Kirkman N.J."/>
            <person name="Mayo K.E."/>
            <person name="Mulders S.M."/>
            <person name="Zhou J."/>
            <person name="Bondy C.A."/>
            <person name="Hsu S.Y."/>
            <person name="King G.J."/>
            <person name="Adashi E.Y."/>
        </authorList>
    </citation>
    <scope>NUCLEOTIDE SEQUENCE [MRNA]</scope>
    <scope>SUBCELLULAR LOCATION</scope>
    <scope>DEVELOPMENTAL STAGE</scope>
    <scope>TISSUE SPECIFICITY</scope>
    <source>
        <strain>C57BL/6J</strain>
    </source>
</reference>
<reference key="2">
    <citation type="journal article" date="2004" name="Genome Res.">
        <title>The status, quality, and expansion of the NIH full-length cDNA project: the Mammalian Gene Collection (MGC).</title>
        <authorList>
            <consortium name="The MGC Project Team"/>
        </authorList>
    </citation>
    <scope>NUCLEOTIDE SEQUENCE [LARGE SCALE MRNA]</scope>
    <source>
        <tissue>Testis</tissue>
    </source>
</reference>
<reference key="3">
    <citation type="journal article" date="2004" name="Hum. Mol. Genet.">
        <title>Age-associated alteration of gene expression patterns in mouse oocytes.</title>
        <authorList>
            <person name="Hamatani T."/>
            <person name="Falco G."/>
            <person name="Carter M.G."/>
            <person name="Akutsu H."/>
            <person name="Stagg C.A."/>
            <person name="Sharov A.A."/>
            <person name="Dudekula D.B."/>
            <person name="VanBuren V."/>
            <person name="Ko M.S.H."/>
        </authorList>
    </citation>
    <scope>NUCLEOTIDE SEQUENCE [MRNA] OF 7-993</scope>
    <source>
        <strain>C57BL/6J</strain>
    </source>
</reference>
<keyword id="KW-0067">ATP-binding</keyword>
<keyword id="KW-0963">Cytoplasm</keyword>
<keyword id="KW-0217">Developmental protein</keyword>
<keyword id="KW-0221">Differentiation</keyword>
<keyword id="KW-0433">Leucine-rich repeat</keyword>
<keyword id="KW-0547">Nucleotide-binding</keyword>
<keyword id="KW-1185">Reference proteome</keyword>
<keyword id="KW-0677">Repeat</keyword>
<keyword id="KW-0744">Spermatogenesis</keyword>
<evidence type="ECO:0000250" key="1"/>
<evidence type="ECO:0000255" key="2">
    <source>
        <dbReference type="PROSITE-ProRule" id="PRU00136"/>
    </source>
</evidence>
<evidence type="ECO:0000269" key="3">
    <source>
    </source>
</evidence>
<evidence type="ECO:0000303" key="4">
    <source>
    </source>
</evidence>
<evidence type="ECO:0000305" key="5"/>
<comment type="function">
    <text evidence="1">May be involved in inflammation and spermatogenesis.</text>
</comment>
<comment type="subcellular location">
    <subcellularLocation>
        <location evidence="3">Cytoplasm</location>
    </subcellularLocation>
</comment>
<comment type="tissue specificity">
    <text evidence="3">Detected in adult ovary and testis. Detected in oocytes and in germ cell elements in seminiferous tubules in adult testis (at protein level).</text>
</comment>
<comment type="developmental stage">
    <text evidence="3">Not detected in ovaries from neonates. First detected in ovaries three days after birth, and expression in ovaries increases dramatically to reach a much higher level eight days after birth.</text>
</comment>
<comment type="similarity">
    <text evidence="5">Belongs to the NLRP family.</text>
</comment>
<comment type="sequence caution" evidence="5">
    <conflict type="erroneous initiation">
        <sequence resource="EMBL-CDS" id="AAT77542"/>
    </conflict>
</comment>
<proteinExistence type="evidence at protein level"/>
<accession>Q6B966</accession>
<accession>B2RUL1</accession>
<accession>Q66X14</accession>
<feature type="chain" id="PRO_0000286339" description="NACHT, LRR and PYD domains-containing protein 14">
    <location>
        <begin position="1"/>
        <end position="993"/>
    </location>
</feature>
<feature type="domain" description="NACHT" evidence="2">
    <location>
        <begin position="81"/>
        <end position="403"/>
    </location>
</feature>
<feature type="repeat" description="LRR 1">
    <location>
        <begin position="636"/>
        <end position="657"/>
    </location>
</feature>
<feature type="repeat" description="LRR 2">
    <location>
        <begin position="660"/>
        <end position="680"/>
    </location>
</feature>
<feature type="repeat" description="LRR 3">
    <location>
        <begin position="688"/>
        <end position="708"/>
    </location>
</feature>
<feature type="repeat" description="LRR 4">
    <location>
        <begin position="717"/>
        <end position="738"/>
    </location>
</feature>
<feature type="repeat" description="LRR 5">
    <location>
        <begin position="745"/>
        <end position="765"/>
    </location>
</feature>
<feature type="repeat" description="LRR 6">
    <location>
        <begin position="774"/>
        <end position="795"/>
    </location>
</feature>
<feature type="repeat" description="LRR 7">
    <location>
        <begin position="802"/>
        <end position="822"/>
    </location>
</feature>
<feature type="repeat" description="LRR 8">
    <location>
        <begin position="831"/>
        <end position="852"/>
    </location>
</feature>
<feature type="repeat" description="LRR 9">
    <location>
        <begin position="859"/>
        <end position="879"/>
    </location>
</feature>
<feature type="binding site" evidence="2">
    <location>
        <begin position="87"/>
        <end position="94"/>
    </location>
    <ligand>
        <name>ATP</name>
        <dbReference type="ChEBI" id="CHEBI:30616"/>
    </ligand>
</feature>
<feature type="sequence conflict" description="In Ref. 3; AAU06320." evidence="5" ref="3">
    <original>C</original>
    <variation>R</variation>
    <location>
        <position position="669"/>
    </location>
</feature>
<feature type="sequence conflict" description="In Ref. 1; AAT77542." evidence="5" ref="1">
    <original>L</original>
    <variation>S</variation>
    <location>
        <position position="689"/>
    </location>
</feature>
<protein>
    <recommendedName>
        <fullName>NACHT, LRR and PYD domains-containing protein 14</fullName>
        <shortName>NALP-iota</shortName>
    </recommendedName>
    <alternativeName>
        <fullName>Germ cell specific leucine-rich repeat NTPase</fullName>
    </alternativeName>
</protein>
<sequence length="993" mass="113386">MKTEDDEMEYEASKEETVSEDKDFDDGIDYRTVIKENIFTMWYKTSLHGEFATLNCVITPKDQNLLQHIFDEDIQTSEAPQTVVLQGAAGIGKTTLLKKAVLEWADGNLYQQFTHVFYLNGKEISQVKEKSFAQLISKHWPSSEGPIEQVLSKPSSLLFIIDSFDELDFSFEEPQFALCKDWTQISPVSFLISSLLRKVMLPESYLLVATRSTAWKRLVPLLQKPQRVKLSGLSKNARMDYIHHLLKDKAWATSAIYSLRMNWRLFHMCHVCHMCQMICAVLKGQVEKGGRVEETCKTSTALFTYYICSLFPRIPVGCVTLPNETLLRSLCKAAVEGIWTMKHVLYQQNLRKHELTREDILLFLDAKVLQQDTEYENCYMFTHLHVQEFFAALFYLLRENLEEQDYPSEPFENLYLLLESNHIHDPHLEQMKCFLFGLLNKDRVRQLEETFNLTISMEVREELLACLEGLEKDDSSLSQLRFQDLLHCIYETQDQEFITQALMYFQKIIVRVDEEPQLRIYSFCLKHCHTLKTMRLTARADLKNMLDTAEMCLEGAAVQVIHYWQDLFSVLHTNESLIEMDLYESRLDESLMKILNEELSHPKCKLQKLIFRAVDFLNGCQDFTFLASNKKVTHLDLKETDLGVNGLKTLCEALKCKGCKLRVLRLASCDLNVARCQKLSNALQTNRSLVFLNLSLNNLSNDGVKSLCEVLENPNSSLERLALASCGLTKAGCKVLSSALTKSKRLTHLCLSDNVLEDEGIKLLSHTLKHPQCTLQSLVLRSCSFTPIGSEHLSTALLHNRSLVHLDLGQNKLADNGVKLLCHSLQQPHCNLQELELMSCVLTSKACGDLASVLVNNSNLWSLDLGHNILDDAGLNILCDALRNPNCHVQRLGLENCGLTPGCCQDLLGILSNNKSVIQMNLMKNALDHESIKNLCKVLRSPTCKMEFLALDKKEILKKKIKKFLVDVRINNPHLVIGPECPNTESGCWWNYF</sequence>
<gene>
    <name type="primary">Nlrp14</name>
    <name evidence="4" type="synonym">Nalp14</name>
</gene>
<organism>
    <name type="scientific">Mus musculus</name>
    <name type="common">Mouse</name>
    <dbReference type="NCBI Taxonomy" id="10090"/>
    <lineage>
        <taxon>Eukaryota</taxon>
        <taxon>Metazoa</taxon>
        <taxon>Chordata</taxon>
        <taxon>Craniata</taxon>
        <taxon>Vertebrata</taxon>
        <taxon>Euteleostomi</taxon>
        <taxon>Mammalia</taxon>
        <taxon>Eutheria</taxon>
        <taxon>Euarchontoglires</taxon>
        <taxon>Glires</taxon>
        <taxon>Rodentia</taxon>
        <taxon>Myomorpha</taxon>
        <taxon>Muroidea</taxon>
        <taxon>Muridae</taxon>
        <taxon>Murinae</taxon>
        <taxon>Mus</taxon>
        <taxon>Mus</taxon>
    </lineage>
</organism>
<name>NAL14_MOUSE</name>